<gene>
    <name type="primary">PCMP-H26</name>
    <name evidence="3" type="synonym">OTP85</name>
    <name type="ordered locus">At2g02980</name>
    <name type="ORF">T17M13.15</name>
</gene>
<keyword id="KW-0150">Chloroplast</keyword>
<keyword id="KW-0507">mRNA processing</keyword>
<keyword id="KW-0934">Plastid</keyword>
<keyword id="KW-1185">Reference proteome</keyword>
<keyword id="KW-0677">Repeat</keyword>
<keyword id="KW-0809">Transit peptide</keyword>
<name>PP145_ARATH</name>
<protein>
    <recommendedName>
        <fullName evidence="4">Pentatricopeptide repeat-containing protein At2g02980, chloroplastic</fullName>
    </recommendedName>
    <alternativeName>
        <fullName evidence="3">Protein ORGANELLE TRANSCRIPT PROCESSING 85</fullName>
    </alternativeName>
</protein>
<dbReference type="EMBL" id="AC004138">
    <property type="protein sequence ID" value="AAC32916.1"/>
    <property type="molecule type" value="Genomic_DNA"/>
</dbReference>
<dbReference type="EMBL" id="CP002685">
    <property type="protein sequence ID" value="AEC05651.1"/>
    <property type="molecule type" value="Genomic_DNA"/>
</dbReference>
<dbReference type="EMBL" id="AF517844">
    <property type="protein sequence ID" value="AAM77644.1"/>
    <property type="molecule type" value="mRNA"/>
</dbReference>
<dbReference type="PIR" id="H84442">
    <property type="entry name" value="H84442"/>
</dbReference>
<dbReference type="RefSeq" id="NP_178398.1">
    <property type="nucleotide sequence ID" value="NM_126350.3"/>
</dbReference>
<dbReference type="SMR" id="Q8LK93"/>
<dbReference type="FunCoup" id="Q8LK93">
    <property type="interactions" value="726"/>
</dbReference>
<dbReference type="STRING" id="3702.Q8LK93"/>
<dbReference type="GlyGen" id="Q8LK93">
    <property type="glycosylation" value="1 site"/>
</dbReference>
<dbReference type="iPTMnet" id="Q8LK93"/>
<dbReference type="PaxDb" id="3702-AT2G02980.1"/>
<dbReference type="ProteomicsDB" id="250493"/>
<dbReference type="EnsemblPlants" id="AT2G02980.1">
    <property type="protein sequence ID" value="AT2G02980.1"/>
    <property type="gene ID" value="AT2G02980"/>
</dbReference>
<dbReference type="GeneID" id="814827"/>
<dbReference type="Gramene" id="AT2G02980.1">
    <property type="protein sequence ID" value="AT2G02980.1"/>
    <property type="gene ID" value="AT2G02980"/>
</dbReference>
<dbReference type="KEGG" id="ath:AT2G02980"/>
<dbReference type="Araport" id="AT2G02980"/>
<dbReference type="TAIR" id="AT2G02980">
    <property type="gene designation" value="OTP85"/>
</dbReference>
<dbReference type="eggNOG" id="KOG4197">
    <property type="taxonomic scope" value="Eukaryota"/>
</dbReference>
<dbReference type="HOGENOM" id="CLU_002706_37_8_1"/>
<dbReference type="InParanoid" id="Q8LK93"/>
<dbReference type="OMA" id="MYTECND"/>
<dbReference type="PhylomeDB" id="Q8LK93"/>
<dbReference type="PRO" id="PR:Q8LK93"/>
<dbReference type="Proteomes" id="UP000006548">
    <property type="component" value="Chromosome 2"/>
</dbReference>
<dbReference type="ExpressionAtlas" id="Q8LK93">
    <property type="expression patterns" value="baseline and differential"/>
</dbReference>
<dbReference type="GO" id="GO:0009507">
    <property type="term" value="C:chloroplast"/>
    <property type="evidence" value="ECO:0000314"/>
    <property type="project" value="TAIR"/>
</dbReference>
<dbReference type="GO" id="GO:0003723">
    <property type="term" value="F:RNA binding"/>
    <property type="evidence" value="ECO:0007669"/>
    <property type="project" value="InterPro"/>
</dbReference>
<dbReference type="GO" id="GO:0008270">
    <property type="term" value="F:zinc ion binding"/>
    <property type="evidence" value="ECO:0007669"/>
    <property type="project" value="InterPro"/>
</dbReference>
<dbReference type="GO" id="GO:0031425">
    <property type="term" value="P:chloroplast RNA processing"/>
    <property type="evidence" value="ECO:0000315"/>
    <property type="project" value="TAIR"/>
</dbReference>
<dbReference type="GO" id="GO:0006397">
    <property type="term" value="P:mRNA processing"/>
    <property type="evidence" value="ECO:0007669"/>
    <property type="project" value="UniProtKB-KW"/>
</dbReference>
<dbReference type="GO" id="GO:0009451">
    <property type="term" value="P:RNA modification"/>
    <property type="evidence" value="ECO:0007669"/>
    <property type="project" value="InterPro"/>
</dbReference>
<dbReference type="FunFam" id="1.25.40.10:FF:000404">
    <property type="entry name" value="Pentatricopeptide repeat-containing protein chloroplastic"/>
    <property type="match status" value="1"/>
</dbReference>
<dbReference type="FunFam" id="1.25.40.10:FF:000427">
    <property type="entry name" value="Pentatricopeptide repeat-containing protein chloroplastic"/>
    <property type="match status" value="1"/>
</dbReference>
<dbReference type="Gene3D" id="1.25.40.10">
    <property type="entry name" value="Tetratricopeptide repeat domain"/>
    <property type="match status" value="2"/>
</dbReference>
<dbReference type="InterPro" id="IPR032867">
    <property type="entry name" value="DYW_dom"/>
</dbReference>
<dbReference type="InterPro" id="IPR046848">
    <property type="entry name" value="E_motif"/>
</dbReference>
<dbReference type="InterPro" id="IPR002885">
    <property type="entry name" value="Pentatricopeptide_rpt"/>
</dbReference>
<dbReference type="InterPro" id="IPR046960">
    <property type="entry name" value="PPR_At4g14850-like_plant"/>
</dbReference>
<dbReference type="InterPro" id="IPR011990">
    <property type="entry name" value="TPR-like_helical_dom_sf"/>
</dbReference>
<dbReference type="NCBIfam" id="TIGR00756">
    <property type="entry name" value="PPR"/>
    <property type="match status" value="4"/>
</dbReference>
<dbReference type="PANTHER" id="PTHR47926:SF488">
    <property type="entry name" value="DYW DOMAIN-CONTAINING PROTEIN"/>
    <property type="match status" value="1"/>
</dbReference>
<dbReference type="PANTHER" id="PTHR47926">
    <property type="entry name" value="PENTATRICOPEPTIDE REPEAT-CONTAINING PROTEIN"/>
    <property type="match status" value="1"/>
</dbReference>
<dbReference type="Pfam" id="PF14432">
    <property type="entry name" value="DYW_deaminase"/>
    <property type="match status" value="1"/>
</dbReference>
<dbReference type="Pfam" id="PF20431">
    <property type="entry name" value="E_motif"/>
    <property type="match status" value="1"/>
</dbReference>
<dbReference type="Pfam" id="PF01535">
    <property type="entry name" value="PPR"/>
    <property type="match status" value="2"/>
</dbReference>
<dbReference type="Pfam" id="PF13041">
    <property type="entry name" value="PPR_2"/>
    <property type="match status" value="3"/>
</dbReference>
<dbReference type="SUPFAM" id="SSF48452">
    <property type="entry name" value="TPR-like"/>
    <property type="match status" value="1"/>
</dbReference>
<dbReference type="PROSITE" id="PS51375">
    <property type="entry name" value="PPR"/>
    <property type="match status" value="10"/>
</dbReference>
<comment type="function">
    <text evidence="2">Involved in RNA editing event in chloroplasts. Required for the editing of a single site in ndhD transcript, which is a plastid-encoded subunits of the chloroplast NAD(P)H dehydrogenase (NDH) complex. Not essential for the activity of the NDH complex of the photosynthetic electron transport chain.</text>
</comment>
<comment type="subcellular location">
    <subcellularLocation>
        <location evidence="2">Plastid</location>
        <location evidence="2">Chloroplast</location>
    </subcellularLocation>
</comment>
<comment type="disruption phenotype">
    <text evidence="2">No visible phenotype under normal growth conditions.</text>
</comment>
<comment type="similarity">
    <text evidence="4">Belongs to the PPR family. PCMP-H subfamily.</text>
</comment>
<comment type="online information" name="Pentatricopeptide repeat proteins">
    <link uri="https://ppr.plantenergy.uwa.edu.au"/>
</comment>
<evidence type="ECO:0000255" key="1"/>
<evidence type="ECO:0000269" key="2">
    <source>
    </source>
</evidence>
<evidence type="ECO:0000303" key="3">
    <source>
    </source>
</evidence>
<evidence type="ECO:0000305" key="4"/>
<reference key="1">
    <citation type="journal article" date="1999" name="Nature">
        <title>Sequence and analysis of chromosome 2 of the plant Arabidopsis thaliana.</title>
        <authorList>
            <person name="Lin X."/>
            <person name="Kaul S."/>
            <person name="Rounsley S.D."/>
            <person name="Shea T.P."/>
            <person name="Benito M.-I."/>
            <person name="Town C.D."/>
            <person name="Fujii C.Y."/>
            <person name="Mason T.M."/>
            <person name="Bowman C.L."/>
            <person name="Barnstead M.E."/>
            <person name="Feldblyum T.V."/>
            <person name="Buell C.R."/>
            <person name="Ketchum K.A."/>
            <person name="Lee J.J."/>
            <person name="Ronning C.M."/>
            <person name="Koo H.L."/>
            <person name="Moffat K.S."/>
            <person name="Cronin L.A."/>
            <person name="Shen M."/>
            <person name="Pai G."/>
            <person name="Van Aken S."/>
            <person name="Umayam L."/>
            <person name="Tallon L.J."/>
            <person name="Gill J.E."/>
            <person name="Adams M.D."/>
            <person name="Carrera A.J."/>
            <person name="Creasy T.H."/>
            <person name="Goodman H.M."/>
            <person name="Somerville C.R."/>
            <person name="Copenhaver G.P."/>
            <person name="Preuss D."/>
            <person name="Nierman W.C."/>
            <person name="White O."/>
            <person name="Eisen J.A."/>
            <person name="Salzberg S.L."/>
            <person name="Fraser C.M."/>
            <person name="Venter J.C."/>
        </authorList>
    </citation>
    <scope>NUCLEOTIDE SEQUENCE [LARGE SCALE GENOMIC DNA]</scope>
    <source>
        <strain>cv. Columbia</strain>
    </source>
</reference>
<reference key="2">
    <citation type="journal article" date="2017" name="Plant J.">
        <title>Araport11: a complete reannotation of the Arabidopsis thaliana reference genome.</title>
        <authorList>
            <person name="Cheng C.Y."/>
            <person name="Krishnakumar V."/>
            <person name="Chan A.P."/>
            <person name="Thibaud-Nissen F."/>
            <person name="Schobel S."/>
            <person name="Town C.D."/>
        </authorList>
    </citation>
    <scope>GENOME REANNOTATION</scope>
    <source>
        <strain>cv. Columbia</strain>
    </source>
</reference>
<reference key="3">
    <citation type="journal article" date="2005" name="Plant Physiol.">
        <title>Analysis of the cDNAs of hypothetical genes on Arabidopsis chromosome 2 reveals numerous transcript variants.</title>
        <authorList>
            <person name="Xiao Y.-L."/>
            <person name="Smith S.R."/>
            <person name="Ishmael N."/>
            <person name="Redman J.C."/>
            <person name="Kumar N."/>
            <person name="Monaghan E.L."/>
            <person name="Ayele M."/>
            <person name="Haas B.J."/>
            <person name="Wu H.C."/>
            <person name="Town C.D."/>
        </authorList>
    </citation>
    <scope>NUCLEOTIDE SEQUENCE [LARGE SCALE MRNA]</scope>
    <source>
        <strain>cv. Columbia</strain>
    </source>
</reference>
<reference key="4">
    <citation type="journal article" date="2000" name="Plant Mol. Biol.">
        <title>In Arabidopsis thaliana, 1% of the genome codes for a novel protein family unique to plants.</title>
        <authorList>
            <person name="Aubourg S."/>
            <person name="Boudet N."/>
            <person name="Kreis M."/>
            <person name="Lecharny A."/>
        </authorList>
    </citation>
    <scope>GENE FAMILY</scope>
</reference>
<reference key="5">
    <citation type="journal article" date="2004" name="Plant Cell">
        <title>Genome-wide analysis of Arabidopsis pentatricopeptide repeat proteins reveals their essential role in organelle biogenesis.</title>
        <authorList>
            <person name="Lurin C."/>
            <person name="Andres C."/>
            <person name="Aubourg S."/>
            <person name="Bellaoui M."/>
            <person name="Bitton F."/>
            <person name="Bruyere C."/>
            <person name="Caboche M."/>
            <person name="Debast C."/>
            <person name="Gualberto J."/>
            <person name="Hoffmann B."/>
            <person name="Lecharny A."/>
            <person name="Le Ret M."/>
            <person name="Martin-Magniette M.-L."/>
            <person name="Mireau H."/>
            <person name="Peeters N."/>
            <person name="Renou J.-P."/>
            <person name="Szurek B."/>
            <person name="Taconnat L."/>
            <person name="Small I."/>
        </authorList>
    </citation>
    <scope>GENE FAMILY</scope>
</reference>
<reference key="6">
    <citation type="journal article" date="2009" name="Plant Cell">
        <title>A study of new Arabidopsis chloroplast RNA editing mutants reveals general features of editing factors and their target sites.</title>
        <authorList>
            <person name="Hammani K."/>
            <person name="Okuda K."/>
            <person name="Tanz S.K."/>
            <person name="Chateigner-Boutin A.L."/>
            <person name="Shikanai T."/>
            <person name="Small I."/>
        </authorList>
    </citation>
    <scope>FUNCTION</scope>
    <scope>SUBCELLULAR LOCATION</scope>
    <scope>DISRUPTION PHENOTYPE</scope>
</reference>
<proteinExistence type="evidence at transcript level"/>
<feature type="transit peptide" description="Chloroplast" evidence="1">
    <location>
        <begin position="1"/>
        <end position="38"/>
    </location>
</feature>
<feature type="chain" id="PRO_0000356005" description="Pentatricopeptide repeat-containing protein At2g02980, chloroplastic" evidence="1">
    <location>
        <begin position="39"/>
        <end position="603"/>
    </location>
</feature>
<feature type="repeat" description="PPR 1">
    <location>
        <begin position="93"/>
        <end position="127"/>
    </location>
</feature>
<feature type="repeat" description="PPR 2">
    <location>
        <begin position="128"/>
        <end position="162"/>
    </location>
</feature>
<feature type="repeat" description="PPR 3">
    <location>
        <begin position="163"/>
        <end position="193"/>
    </location>
</feature>
<feature type="repeat" description="PPR 4">
    <location>
        <begin position="194"/>
        <end position="228"/>
    </location>
</feature>
<feature type="repeat" description="PPR 5">
    <location>
        <begin position="229"/>
        <end position="263"/>
    </location>
</feature>
<feature type="repeat" description="PPR 6">
    <location>
        <begin position="264"/>
        <end position="294"/>
    </location>
</feature>
<feature type="repeat" description="PPR 7">
    <location>
        <begin position="295"/>
        <end position="329"/>
    </location>
</feature>
<feature type="repeat" description="PPR 8">
    <location>
        <begin position="330"/>
        <end position="365"/>
    </location>
</feature>
<feature type="repeat" description="PPR 9">
    <location>
        <begin position="366"/>
        <end position="400"/>
    </location>
</feature>
<feature type="repeat" description="PPR 10">
    <location>
        <begin position="432"/>
        <end position="466"/>
    </location>
</feature>
<feature type="region of interest" description="Type E motif">
    <location>
        <begin position="401"/>
        <end position="476"/>
    </location>
</feature>
<feature type="region of interest" description="Type E(+) motif">
    <location>
        <begin position="477"/>
        <end position="507"/>
    </location>
</feature>
<feature type="region of interest" description="Type DYW motif">
    <location>
        <begin position="508"/>
        <end position="603"/>
    </location>
</feature>
<accession>Q8LK93</accession>
<accession>O80613</accession>
<organism>
    <name type="scientific">Arabidopsis thaliana</name>
    <name type="common">Mouse-ear cress</name>
    <dbReference type="NCBI Taxonomy" id="3702"/>
    <lineage>
        <taxon>Eukaryota</taxon>
        <taxon>Viridiplantae</taxon>
        <taxon>Streptophyta</taxon>
        <taxon>Embryophyta</taxon>
        <taxon>Tracheophyta</taxon>
        <taxon>Spermatophyta</taxon>
        <taxon>Magnoliopsida</taxon>
        <taxon>eudicotyledons</taxon>
        <taxon>Gunneridae</taxon>
        <taxon>Pentapetalae</taxon>
        <taxon>rosids</taxon>
        <taxon>malvids</taxon>
        <taxon>Brassicales</taxon>
        <taxon>Brassicaceae</taxon>
        <taxon>Camelineae</taxon>
        <taxon>Arabidopsis</taxon>
    </lineage>
</organism>
<sequence>MAISSASLISSFSHAETFTKHSKIDTVNTQNPILLISKCNSLRELMQIQAYAIKSHIEDVSFVAKLINFCTESPTESSMSYARHLFEAMSEPDIVIFNSMARGYSRFTNPLEVFSLFVEILEDGILPDNYTFPSLLKACAVAKALEEGRQLHCLSMKLGLDDNVYVCPTLINMYTECEDVDSARCVFDRIVEPCVVCYNAMITGYARRNRPNEALSLFREMQGKYLKPNEITLLSVLSSCALLGSLDLGKWIHKYAKKHSFCKYVKVNTALIDMFAKCGSLDDAVSIFEKMRYKDTQAWSAMIVAYANHGKAEKSMLMFERMRSENVQPDEITFLGLLNACSHTGRVEEGRKYFSQMVSKFGIVPSIKHYGSMVDLLSRAGNLEDAYEFIDKLPISPTPMLWRILLAACSSHNNLDLAEKVSERIFELDDSHGGDYVILSNLYARNKKWEYVDSLRKVMKDRKAVKVPGCSSIEVNNVVHEFFSGDGVKSATTKLHRALDEMVKELKLSGYVPDTSMVVHANMNDQEKEITLRYHSEKLAITFGLLNTPPGTTIRVVKNLRVCRDCHNAAKLISLIFGRKVVLRDVQRFHHFEDGKCSCGDFW</sequence>